<proteinExistence type="evidence at protein level"/>
<comment type="function">
    <molecule>[Thr6]-bradykinin</molecule>
    <text evidence="1">Inhibits ACE with a Ki of 1.6 uM, and targets B2 bradykinin receptor (BDKRB2). Provokes contraction of smooth muscle preparation (ileum). In vivo, induces an early hyperalgesic effects in living rats after intraplantar injection (By similarity).</text>
</comment>
<comment type="subcellular location">
    <subcellularLocation>
        <location evidence="4">Secreted</location>
    </subcellularLocation>
</comment>
<comment type="tissue specificity">
    <text evidence="4">Expressed by the skin glands.</text>
</comment>
<comment type="PTM">
    <text evidence="4">Asp,Pro,Glu-[Thr6,Val10]-phyllokinin and [Thr6,Val10]-phyllokinin occur in sulfated and nonsulfated forms. [Thr6]-bradykinin and Des-Arg-[Thr6]-bradykinin are nonsulfated.</text>
</comment>
<comment type="mass spectrometry">
    <molecule>Asp,Pro,Glu-[Thr6,Val10]-phyllokinin</molecule>
    <text>Sulfated.</text>
</comment>
<comment type="mass spectrometry">
    <molecule>Asp,Pro,Glu-[Thr6,Val10]-phyllokinin</molecule>
    <text>Nonsulfated.</text>
</comment>
<comment type="mass spectrometry">
    <molecule>[Thr6,Val10]-phyllokinin</molecule>
    <text>Sulfated.</text>
</comment>
<comment type="mass spectrometry">
    <molecule>[Thr6,Val10]-phyllokinin</molecule>
    <text>Nonsulfated.</text>
</comment>
<comment type="mass spectrometry">
    <molecule>[Thr6]-bradykinin</molecule>
</comment>
<comment type="mass spectrometry">
    <molecule>Des-Arg9-[Thr6]-bradykinin</molecule>
</comment>
<comment type="similarity">
    <text evidence="6">Belongs to the frog skin active peptide (FSAP) family. Bradykinin-related peptide subfamily.</text>
</comment>
<name>BRKP1_PITAZ</name>
<gene>
    <name evidence="7" type="primary">pp-H1</name>
</gene>
<sequence>MSFLKKSLFLVLFLGLVSSSICEEEKRETEEEENEDEIEEESEEKKREDPERPPGFTPFRVY</sequence>
<evidence type="ECO:0000250" key="1"/>
<evidence type="ECO:0000255" key="2"/>
<evidence type="ECO:0000256" key="3">
    <source>
        <dbReference type="SAM" id="MobiDB-lite"/>
    </source>
</evidence>
<evidence type="ECO:0000269" key="4">
    <source>
    </source>
</evidence>
<evidence type="ECO:0000303" key="5">
    <source>
    </source>
</evidence>
<evidence type="ECO:0000305" key="6"/>
<evidence type="ECO:0000312" key="7">
    <source>
        <dbReference type="EMBL" id="CAK55549.1"/>
    </source>
</evidence>
<dbReference type="EMBL" id="AM283482">
    <property type="protein sequence ID" value="CAK55549.1"/>
    <property type="molecule type" value="mRNA"/>
</dbReference>
<dbReference type="GO" id="GO:0005576">
    <property type="term" value="C:extracellular region"/>
    <property type="evidence" value="ECO:0007669"/>
    <property type="project" value="UniProtKB-SubCell"/>
</dbReference>
<dbReference type="GO" id="GO:0090729">
    <property type="term" value="F:toxin activity"/>
    <property type="evidence" value="ECO:0007669"/>
    <property type="project" value="UniProtKB-KW"/>
</dbReference>
<dbReference type="GO" id="GO:0006952">
    <property type="term" value="P:defense response"/>
    <property type="evidence" value="ECO:0007669"/>
    <property type="project" value="UniProtKB-KW"/>
</dbReference>
<dbReference type="InterPro" id="IPR004275">
    <property type="entry name" value="Frog_antimicrobial_propeptide"/>
</dbReference>
<dbReference type="Pfam" id="PF03032">
    <property type="entry name" value="FSAP_sig_propep"/>
    <property type="match status" value="1"/>
</dbReference>
<keyword id="KW-0878">Amphibian defense peptide</keyword>
<keyword id="KW-1222">Bradykinin receptor impairing toxin</keyword>
<keyword id="KW-0903">Direct protein sequencing</keyword>
<keyword id="KW-1213">G-protein coupled receptor impairing toxin</keyword>
<keyword id="KW-0964">Secreted</keyword>
<keyword id="KW-0732">Signal</keyword>
<keyword id="KW-0765">Sulfation</keyword>
<keyword id="KW-0800">Toxin</keyword>
<organism>
    <name type="scientific">Pithecopus azureus</name>
    <name type="common">Orange-legged monkey tree frog</name>
    <name type="synonym">Phyllomedusa azurea</name>
    <dbReference type="NCBI Taxonomy" id="2034991"/>
    <lineage>
        <taxon>Eukaryota</taxon>
        <taxon>Metazoa</taxon>
        <taxon>Chordata</taxon>
        <taxon>Craniata</taxon>
        <taxon>Vertebrata</taxon>
        <taxon>Euteleostomi</taxon>
        <taxon>Amphibia</taxon>
        <taxon>Batrachia</taxon>
        <taxon>Anura</taxon>
        <taxon>Neobatrachia</taxon>
        <taxon>Hyloidea</taxon>
        <taxon>Hylidae</taxon>
        <taxon>Phyllomedusinae</taxon>
        <taxon>Pithecopus</taxon>
    </lineage>
</organism>
<reference evidence="6" key="1">
    <citation type="journal article" date="2006" name="Rapid Commun. Mass Spectrom.">
        <title>Bradykinin-related peptides from Phyllomedusa hypochondrialis azurea: Mass spectrometric structural characterisation and cloning of precursor cDNAs.</title>
        <authorList>
            <person name="Thompson A.H."/>
            <person name="Bjourson A.J."/>
            <person name="Shaw C."/>
            <person name="McClean S."/>
        </authorList>
    </citation>
    <scope>NUCLEOTIDE SEQUENCE [MRNA]</scope>
    <scope>PROTEIN SEQUENCE OF 49-62</scope>
    <scope>SUBCELLULAR LOCATION</scope>
    <scope>TISSUE SPECIFICITY</scope>
    <scope>MASS SPECTROMETRY</scope>
    <scope>SULFATION AT TYR-62</scope>
    <source>
        <tissue>Skin</tissue>
        <tissue evidence="4">Skin secretion</tissue>
    </source>
</reference>
<protein>
    <recommendedName>
        <fullName evidence="5">Phyllokinin-1</fullName>
    </recommendedName>
    <component>
        <recommendedName>
            <fullName evidence="5">Asp,Pro,Glu-[Thr6,Val10]-phyllokinin</fullName>
        </recommendedName>
    </component>
    <component>
        <recommendedName>
            <fullName evidence="5">[Thr6,Val10]-phyllokinin</fullName>
        </recommendedName>
    </component>
    <component>
        <recommendedName>
            <fullName evidence="5">[Thr6]-bradykinin</fullName>
        </recommendedName>
    </component>
    <component>
        <recommendedName>
            <fullName>Des-Arg9-[Thr6]-bradykinin</fullName>
            <shortName evidence="5">Des-Arg-[Thr6]-bradykinin</shortName>
        </recommendedName>
    </component>
</protein>
<accession>Q0VTT9</accession>
<accession>P84932</accession>
<feature type="signal peptide" evidence="2">
    <location>
        <begin position="1"/>
        <end position="19"/>
    </location>
</feature>
<feature type="propeptide" id="PRO_0000250596" evidence="4">
    <location>
        <begin position="20"/>
        <end position="48"/>
    </location>
</feature>
<feature type="peptide" id="PRO_0000343886" description="Asp,Pro,Glu-[Thr6,Val10]-phyllokinin" evidence="4">
    <location>
        <begin position="49"/>
        <end position="62"/>
    </location>
</feature>
<feature type="peptide" id="PRO_0000250597" description="[Thr6,Val10]-phyllokinin" evidence="4">
    <location>
        <begin position="52"/>
        <end position="62"/>
    </location>
</feature>
<feature type="peptide" id="PRO_0000343887" description="[Thr6]-bradykinin" evidence="4">
    <location>
        <begin position="52"/>
        <end position="60"/>
    </location>
</feature>
<feature type="peptide" id="PRO_0000343888" description="Des-Arg9-[Thr6]-bradykinin" evidence="4">
    <location>
        <begin position="52"/>
        <end position="59"/>
    </location>
</feature>
<feature type="region of interest" description="Disordered" evidence="3">
    <location>
        <begin position="22"/>
        <end position="62"/>
    </location>
</feature>
<feature type="compositionally biased region" description="Acidic residues" evidence="3">
    <location>
        <begin position="30"/>
        <end position="42"/>
    </location>
</feature>
<feature type="compositionally biased region" description="Basic and acidic residues" evidence="3">
    <location>
        <begin position="43"/>
        <end position="52"/>
    </location>
</feature>
<feature type="modified residue" description="Sulfotyrosine; partial" evidence="4">
    <location>
        <position position="62"/>
    </location>
</feature>